<name>UBIG_PHOPR</name>
<evidence type="ECO:0000255" key="1">
    <source>
        <dbReference type="HAMAP-Rule" id="MF_00472"/>
    </source>
</evidence>
<gene>
    <name evidence="1" type="primary">ubiG</name>
    <name type="ordered locus">PBPRA2457</name>
</gene>
<reference key="1">
    <citation type="journal article" date="2005" name="Science">
        <title>Life at depth: Photobacterium profundum genome sequence and expression analysis.</title>
        <authorList>
            <person name="Vezzi A."/>
            <person name="Campanaro S."/>
            <person name="D'Angelo M."/>
            <person name="Simonato F."/>
            <person name="Vitulo N."/>
            <person name="Lauro F.M."/>
            <person name="Cestaro A."/>
            <person name="Malacrida G."/>
            <person name="Simionati B."/>
            <person name="Cannata N."/>
            <person name="Romualdi C."/>
            <person name="Bartlett D.H."/>
            <person name="Valle G."/>
        </authorList>
    </citation>
    <scope>NUCLEOTIDE SEQUENCE [LARGE SCALE GENOMIC DNA]</scope>
    <source>
        <strain>ATCC BAA-1253 / SS9</strain>
    </source>
</reference>
<accession>Q6LPD7</accession>
<sequence length="235" mass="26171">MTKQLNVDPAEISKFEDMASRWWDLEGEFKPLHQINPLRLNYVTDHAGGLFGKKILDVGCGGGILAESMAIEGADVTGLDMGKEPLTVARLHALETGAKLDYVLRTAEEQAELHPETYDIVTCMEMLEHVPNPASVIAACAKMVKPNGHVFFSTLNRNAKSYLFAIVGAEQLLKLVPKGTHDHKKFIRPSELIAMIDQTPLQDRHITGLHYNPLTDNYWLGKSVEVNYIVHTVKL</sequence>
<dbReference type="EC" id="2.1.1.222" evidence="1"/>
<dbReference type="EC" id="2.1.1.64" evidence="1"/>
<dbReference type="EMBL" id="CR378671">
    <property type="protein sequence ID" value="CAG20839.1"/>
    <property type="molecule type" value="Genomic_DNA"/>
</dbReference>
<dbReference type="RefSeq" id="WP_011219122.1">
    <property type="nucleotide sequence ID" value="NC_006370.1"/>
</dbReference>
<dbReference type="SMR" id="Q6LPD7"/>
<dbReference type="STRING" id="298386.PBPRA2457"/>
<dbReference type="KEGG" id="ppr:PBPRA2457"/>
<dbReference type="eggNOG" id="COG2227">
    <property type="taxonomic scope" value="Bacteria"/>
</dbReference>
<dbReference type="HOGENOM" id="CLU_042432_5_0_6"/>
<dbReference type="UniPathway" id="UPA00232"/>
<dbReference type="Proteomes" id="UP000000593">
    <property type="component" value="Chromosome 1"/>
</dbReference>
<dbReference type="GO" id="GO:0102208">
    <property type="term" value="F:2-polyprenyl-6-hydroxyphenol methylase activity"/>
    <property type="evidence" value="ECO:0007669"/>
    <property type="project" value="UniProtKB-EC"/>
</dbReference>
<dbReference type="GO" id="GO:0061542">
    <property type="term" value="F:3-demethylubiquinol 3-O-methyltransferase activity"/>
    <property type="evidence" value="ECO:0007669"/>
    <property type="project" value="UniProtKB-UniRule"/>
</dbReference>
<dbReference type="GO" id="GO:0010420">
    <property type="term" value="F:polyprenyldihydroxybenzoate methyltransferase activity"/>
    <property type="evidence" value="ECO:0007669"/>
    <property type="project" value="InterPro"/>
</dbReference>
<dbReference type="GO" id="GO:0032259">
    <property type="term" value="P:methylation"/>
    <property type="evidence" value="ECO:0007669"/>
    <property type="project" value="UniProtKB-KW"/>
</dbReference>
<dbReference type="CDD" id="cd02440">
    <property type="entry name" value="AdoMet_MTases"/>
    <property type="match status" value="1"/>
</dbReference>
<dbReference type="FunFam" id="3.40.50.150:FF:000028">
    <property type="entry name" value="Ubiquinone biosynthesis O-methyltransferase"/>
    <property type="match status" value="1"/>
</dbReference>
<dbReference type="Gene3D" id="3.40.50.150">
    <property type="entry name" value="Vaccinia Virus protein VP39"/>
    <property type="match status" value="1"/>
</dbReference>
<dbReference type="HAMAP" id="MF_00472">
    <property type="entry name" value="UbiG"/>
    <property type="match status" value="1"/>
</dbReference>
<dbReference type="InterPro" id="IPR029063">
    <property type="entry name" value="SAM-dependent_MTases_sf"/>
</dbReference>
<dbReference type="InterPro" id="IPR010233">
    <property type="entry name" value="UbiG_MeTrfase"/>
</dbReference>
<dbReference type="NCBIfam" id="TIGR01983">
    <property type="entry name" value="UbiG"/>
    <property type="match status" value="1"/>
</dbReference>
<dbReference type="PANTHER" id="PTHR43464">
    <property type="entry name" value="METHYLTRANSFERASE"/>
    <property type="match status" value="1"/>
</dbReference>
<dbReference type="PANTHER" id="PTHR43464:SF19">
    <property type="entry name" value="UBIQUINONE BIOSYNTHESIS O-METHYLTRANSFERASE, MITOCHONDRIAL"/>
    <property type="match status" value="1"/>
</dbReference>
<dbReference type="Pfam" id="PF13489">
    <property type="entry name" value="Methyltransf_23"/>
    <property type="match status" value="1"/>
</dbReference>
<dbReference type="SUPFAM" id="SSF53335">
    <property type="entry name" value="S-adenosyl-L-methionine-dependent methyltransferases"/>
    <property type="match status" value="1"/>
</dbReference>
<organism>
    <name type="scientific">Photobacterium profundum (strain SS9)</name>
    <dbReference type="NCBI Taxonomy" id="298386"/>
    <lineage>
        <taxon>Bacteria</taxon>
        <taxon>Pseudomonadati</taxon>
        <taxon>Pseudomonadota</taxon>
        <taxon>Gammaproteobacteria</taxon>
        <taxon>Vibrionales</taxon>
        <taxon>Vibrionaceae</taxon>
        <taxon>Photobacterium</taxon>
    </lineage>
</organism>
<feature type="chain" id="PRO_0000193390" description="Ubiquinone biosynthesis O-methyltransferase">
    <location>
        <begin position="1"/>
        <end position="235"/>
    </location>
</feature>
<feature type="binding site" evidence="1">
    <location>
        <position position="39"/>
    </location>
    <ligand>
        <name>S-adenosyl-L-methionine</name>
        <dbReference type="ChEBI" id="CHEBI:59789"/>
    </ligand>
</feature>
<feature type="binding site" evidence="1">
    <location>
        <position position="59"/>
    </location>
    <ligand>
        <name>S-adenosyl-L-methionine</name>
        <dbReference type="ChEBI" id="CHEBI:59789"/>
    </ligand>
</feature>
<feature type="binding site" evidence="1">
    <location>
        <position position="80"/>
    </location>
    <ligand>
        <name>S-adenosyl-L-methionine</name>
        <dbReference type="ChEBI" id="CHEBI:59789"/>
    </ligand>
</feature>
<feature type="binding site" evidence="1">
    <location>
        <position position="124"/>
    </location>
    <ligand>
        <name>S-adenosyl-L-methionine</name>
        <dbReference type="ChEBI" id="CHEBI:59789"/>
    </ligand>
</feature>
<keyword id="KW-0489">Methyltransferase</keyword>
<keyword id="KW-1185">Reference proteome</keyword>
<keyword id="KW-0949">S-adenosyl-L-methionine</keyword>
<keyword id="KW-0808">Transferase</keyword>
<keyword id="KW-0831">Ubiquinone biosynthesis</keyword>
<proteinExistence type="inferred from homology"/>
<protein>
    <recommendedName>
        <fullName evidence="1">Ubiquinone biosynthesis O-methyltransferase</fullName>
    </recommendedName>
    <alternativeName>
        <fullName evidence="1">2-polyprenyl-6-hydroxyphenol methylase</fullName>
        <ecNumber evidence="1">2.1.1.222</ecNumber>
    </alternativeName>
    <alternativeName>
        <fullName evidence="1">3-demethylubiquinone 3-O-methyltransferase</fullName>
        <ecNumber evidence="1">2.1.1.64</ecNumber>
    </alternativeName>
</protein>
<comment type="function">
    <text evidence="1">O-methyltransferase that catalyzes the 2 O-methylation steps in the ubiquinone biosynthetic pathway.</text>
</comment>
<comment type="catalytic activity">
    <reaction evidence="1">
        <text>a 3-demethylubiquinol + S-adenosyl-L-methionine = a ubiquinol + S-adenosyl-L-homocysteine + H(+)</text>
        <dbReference type="Rhea" id="RHEA:44380"/>
        <dbReference type="Rhea" id="RHEA-COMP:9566"/>
        <dbReference type="Rhea" id="RHEA-COMP:10914"/>
        <dbReference type="ChEBI" id="CHEBI:15378"/>
        <dbReference type="ChEBI" id="CHEBI:17976"/>
        <dbReference type="ChEBI" id="CHEBI:57856"/>
        <dbReference type="ChEBI" id="CHEBI:59789"/>
        <dbReference type="ChEBI" id="CHEBI:84422"/>
        <dbReference type="EC" id="2.1.1.64"/>
    </reaction>
</comment>
<comment type="catalytic activity">
    <reaction evidence="1">
        <text>a 3-(all-trans-polyprenyl)benzene-1,2-diol + S-adenosyl-L-methionine = a 2-methoxy-6-(all-trans-polyprenyl)phenol + S-adenosyl-L-homocysteine + H(+)</text>
        <dbReference type="Rhea" id="RHEA:31411"/>
        <dbReference type="Rhea" id="RHEA-COMP:9550"/>
        <dbReference type="Rhea" id="RHEA-COMP:9551"/>
        <dbReference type="ChEBI" id="CHEBI:15378"/>
        <dbReference type="ChEBI" id="CHEBI:57856"/>
        <dbReference type="ChEBI" id="CHEBI:59789"/>
        <dbReference type="ChEBI" id="CHEBI:62729"/>
        <dbReference type="ChEBI" id="CHEBI:62731"/>
        <dbReference type="EC" id="2.1.1.222"/>
    </reaction>
</comment>
<comment type="pathway">
    <text evidence="1">Cofactor biosynthesis; ubiquinone biosynthesis.</text>
</comment>
<comment type="similarity">
    <text evidence="1">Belongs to the methyltransferase superfamily. UbiG/COQ3 family.</text>
</comment>